<proteinExistence type="inferred from homology"/>
<evidence type="ECO:0000255" key="1">
    <source>
        <dbReference type="HAMAP-Rule" id="MF_00111"/>
    </source>
</evidence>
<accession>Q9ZLI6</accession>
<dbReference type="EC" id="2.5.1.7" evidence="1"/>
<dbReference type="EMBL" id="AE001439">
    <property type="protein sequence ID" value="AAD06166.1"/>
    <property type="molecule type" value="Genomic_DNA"/>
</dbReference>
<dbReference type="PIR" id="G71913">
    <property type="entry name" value="G71913"/>
</dbReference>
<dbReference type="RefSeq" id="WP_000346449.1">
    <property type="nucleotide sequence ID" value="NC_000921.1"/>
</dbReference>
<dbReference type="SMR" id="Q9ZLI6"/>
<dbReference type="KEGG" id="hpj:jhp_0593"/>
<dbReference type="eggNOG" id="COG0766">
    <property type="taxonomic scope" value="Bacteria"/>
</dbReference>
<dbReference type="UniPathway" id="UPA00219"/>
<dbReference type="Proteomes" id="UP000000804">
    <property type="component" value="Chromosome"/>
</dbReference>
<dbReference type="GO" id="GO:0005737">
    <property type="term" value="C:cytoplasm"/>
    <property type="evidence" value="ECO:0007669"/>
    <property type="project" value="UniProtKB-SubCell"/>
</dbReference>
<dbReference type="GO" id="GO:0008760">
    <property type="term" value="F:UDP-N-acetylglucosamine 1-carboxyvinyltransferase activity"/>
    <property type="evidence" value="ECO:0007669"/>
    <property type="project" value="UniProtKB-UniRule"/>
</dbReference>
<dbReference type="GO" id="GO:0051301">
    <property type="term" value="P:cell division"/>
    <property type="evidence" value="ECO:0007669"/>
    <property type="project" value="UniProtKB-KW"/>
</dbReference>
<dbReference type="GO" id="GO:0071555">
    <property type="term" value="P:cell wall organization"/>
    <property type="evidence" value="ECO:0007669"/>
    <property type="project" value="UniProtKB-KW"/>
</dbReference>
<dbReference type="GO" id="GO:0009252">
    <property type="term" value="P:peptidoglycan biosynthetic process"/>
    <property type="evidence" value="ECO:0007669"/>
    <property type="project" value="UniProtKB-UniRule"/>
</dbReference>
<dbReference type="GO" id="GO:0008360">
    <property type="term" value="P:regulation of cell shape"/>
    <property type="evidence" value="ECO:0007669"/>
    <property type="project" value="UniProtKB-KW"/>
</dbReference>
<dbReference type="GO" id="GO:0019277">
    <property type="term" value="P:UDP-N-acetylgalactosamine biosynthetic process"/>
    <property type="evidence" value="ECO:0007669"/>
    <property type="project" value="InterPro"/>
</dbReference>
<dbReference type="CDD" id="cd01555">
    <property type="entry name" value="UdpNAET"/>
    <property type="match status" value="1"/>
</dbReference>
<dbReference type="FunFam" id="3.65.10.10:FF:000001">
    <property type="entry name" value="UDP-N-acetylglucosamine 1-carboxyvinyltransferase"/>
    <property type="match status" value="1"/>
</dbReference>
<dbReference type="Gene3D" id="3.65.10.10">
    <property type="entry name" value="Enolpyruvate transferase domain"/>
    <property type="match status" value="2"/>
</dbReference>
<dbReference type="HAMAP" id="MF_00111">
    <property type="entry name" value="MurA"/>
    <property type="match status" value="1"/>
</dbReference>
<dbReference type="InterPro" id="IPR001986">
    <property type="entry name" value="Enolpyruvate_Tfrase_dom"/>
</dbReference>
<dbReference type="InterPro" id="IPR036968">
    <property type="entry name" value="Enolpyruvate_Tfrase_sf"/>
</dbReference>
<dbReference type="InterPro" id="IPR050068">
    <property type="entry name" value="MurA_subfamily"/>
</dbReference>
<dbReference type="InterPro" id="IPR013792">
    <property type="entry name" value="RNA3'P_cycl/enolpyr_Trfase_a/b"/>
</dbReference>
<dbReference type="InterPro" id="IPR005750">
    <property type="entry name" value="UDP_GlcNAc_COvinyl_MurA"/>
</dbReference>
<dbReference type="NCBIfam" id="TIGR01072">
    <property type="entry name" value="murA"/>
    <property type="match status" value="1"/>
</dbReference>
<dbReference type="NCBIfam" id="NF006873">
    <property type="entry name" value="PRK09369.1"/>
    <property type="match status" value="1"/>
</dbReference>
<dbReference type="PANTHER" id="PTHR43783">
    <property type="entry name" value="UDP-N-ACETYLGLUCOSAMINE 1-CARBOXYVINYLTRANSFERASE"/>
    <property type="match status" value="1"/>
</dbReference>
<dbReference type="PANTHER" id="PTHR43783:SF1">
    <property type="entry name" value="UDP-N-ACETYLGLUCOSAMINE 1-CARBOXYVINYLTRANSFERASE"/>
    <property type="match status" value="1"/>
</dbReference>
<dbReference type="Pfam" id="PF00275">
    <property type="entry name" value="EPSP_synthase"/>
    <property type="match status" value="1"/>
</dbReference>
<dbReference type="SUPFAM" id="SSF55205">
    <property type="entry name" value="EPT/RTPC-like"/>
    <property type="match status" value="1"/>
</dbReference>
<sequence>MDFLEIVGQVPLKGEVEISGAKNSALPILAATLLSHQEVKIKSLPQVVDIKAMALLLQNLGAELEWLNPHTLQLSAKSLHHTEATYDLVRKMRASILVLGPLLARFKECLVSLPGGCAIGARPVDLHLKAMQQLGAEIKIEQGYIHAKAPKGLKGNDILFDKISVTGTENALMAASLAKGITRIINAAKEPEIAQLCAFLQSGGVEIEGVDSSELKIRGVESDALNLKDIQIIPDRIEAGTCLCVGAITNSQLKINHIIPNHIQAITDKLIEIGFPLDIQENSIEIYPAKKRQAFEITTKEYPGFPTDMQAQFMALATQCLGTSIIEETLFENRFMHASELQRLGANISLKTNVATISGSTELTGSDVMATDLRASSALVLAALVAKGVSRVHRIYHLDRGYERLEDKVNALGAKVLRLKEK</sequence>
<keyword id="KW-0131">Cell cycle</keyword>
<keyword id="KW-0132">Cell division</keyword>
<keyword id="KW-0133">Cell shape</keyword>
<keyword id="KW-0961">Cell wall biogenesis/degradation</keyword>
<keyword id="KW-0963">Cytoplasm</keyword>
<keyword id="KW-0573">Peptidoglycan synthesis</keyword>
<keyword id="KW-0670">Pyruvate</keyword>
<keyword id="KW-0808">Transferase</keyword>
<comment type="function">
    <text evidence="1">Cell wall formation. Adds enolpyruvyl to UDP-N-acetylglucosamine.</text>
</comment>
<comment type="catalytic activity">
    <reaction evidence="1">
        <text>phosphoenolpyruvate + UDP-N-acetyl-alpha-D-glucosamine = UDP-N-acetyl-3-O-(1-carboxyvinyl)-alpha-D-glucosamine + phosphate</text>
        <dbReference type="Rhea" id="RHEA:18681"/>
        <dbReference type="ChEBI" id="CHEBI:43474"/>
        <dbReference type="ChEBI" id="CHEBI:57705"/>
        <dbReference type="ChEBI" id="CHEBI:58702"/>
        <dbReference type="ChEBI" id="CHEBI:68483"/>
        <dbReference type="EC" id="2.5.1.7"/>
    </reaction>
</comment>
<comment type="pathway">
    <text evidence="1">Cell wall biogenesis; peptidoglycan biosynthesis.</text>
</comment>
<comment type="subcellular location">
    <subcellularLocation>
        <location evidence="1">Cytoplasm</location>
    </subcellularLocation>
</comment>
<comment type="similarity">
    <text evidence="1">Belongs to the EPSP synthase family. MurA subfamily.</text>
</comment>
<gene>
    <name evidence="1" type="primary">murA</name>
    <name type="synonym">murZ</name>
    <name type="ordered locus">jhp_0593</name>
</gene>
<protein>
    <recommendedName>
        <fullName evidence="1">UDP-N-acetylglucosamine 1-carboxyvinyltransferase</fullName>
        <ecNumber evidence="1">2.5.1.7</ecNumber>
    </recommendedName>
    <alternativeName>
        <fullName evidence="1">Enoylpyruvate transferase</fullName>
    </alternativeName>
    <alternativeName>
        <fullName evidence="1">UDP-N-acetylglucosamine enolpyruvyl transferase</fullName>
        <shortName evidence="1">EPT</shortName>
    </alternativeName>
</protein>
<name>MURA_HELPJ</name>
<reference key="1">
    <citation type="journal article" date="1999" name="Nature">
        <title>Genomic sequence comparison of two unrelated isolates of the human gastric pathogen Helicobacter pylori.</title>
        <authorList>
            <person name="Alm R.A."/>
            <person name="Ling L.-S.L."/>
            <person name="Moir D.T."/>
            <person name="King B.L."/>
            <person name="Brown E.D."/>
            <person name="Doig P.C."/>
            <person name="Smith D.R."/>
            <person name="Noonan B."/>
            <person name="Guild B.C."/>
            <person name="deJonge B.L."/>
            <person name="Carmel G."/>
            <person name="Tummino P.J."/>
            <person name="Caruso A."/>
            <person name="Uria-Nickelsen M."/>
            <person name="Mills D.M."/>
            <person name="Ives C."/>
            <person name="Gibson R."/>
            <person name="Merberg D."/>
            <person name="Mills S.D."/>
            <person name="Jiang Q."/>
            <person name="Taylor D.E."/>
            <person name="Vovis G.F."/>
            <person name="Trust T.J."/>
        </authorList>
    </citation>
    <scope>NUCLEOTIDE SEQUENCE [LARGE SCALE GENOMIC DNA]</scope>
    <source>
        <strain>J99 / ATCC 700824</strain>
    </source>
</reference>
<feature type="chain" id="PRO_0000178878" description="UDP-N-acetylglucosamine 1-carboxyvinyltransferase">
    <location>
        <begin position="1"/>
        <end position="422"/>
    </location>
</feature>
<feature type="active site" description="Proton donor" evidence="1">
    <location>
        <position position="117"/>
    </location>
</feature>
<feature type="binding site" evidence="1">
    <location>
        <begin position="22"/>
        <end position="23"/>
    </location>
    <ligand>
        <name>phosphoenolpyruvate</name>
        <dbReference type="ChEBI" id="CHEBI:58702"/>
    </ligand>
</feature>
<feature type="binding site" evidence="1">
    <location>
        <position position="93"/>
    </location>
    <ligand>
        <name>UDP-N-acetyl-alpha-D-glucosamine</name>
        <dbReference type="ChEBI" id="CHEBI:57705"/>
    </ligand>
</feature>
<feature type="binding site" evidence="1">
    <location>
        <begin position="122"/>
        <end position="126"/>
    </location>
    <ligand>
        <name>UDP-N-acetyl-alpha-D-glucosamine</name>
        <dbReference type="ChEBI" id="CHEBI:57705"/>
    </ligand>
</feature>
<feature type="binding site" evidence="1">
    <location>
        <position position="308"/>
    </location>
    <ligand>
        <name>UDP-N-acetyl-alpha-D-glucosamine</name>
        <dbReference type="ChEBI" id="CHEBI:57705"/>
    </ligand>
</feature>
<feature type="binding site" evidence="1">
    <location>
        <position position="330"/>
    </location>
    <ligand>
        <name>UDP-N-acetyl-alpha-D-glucosamine</name>
        <dbReference type="ChEBI" id="CHEBI:57705"/>
    </ligand>
</feature>
<feature type="modified residue" description="2-(S-cysteinyl)pyruvic acid O-phosphothioketal" evidence="1">
    <location>
        <position position="117"/>
    </location>
</feature>
<organism>
    <name type="scientific">Helicobacter pylori (strain J99 / ATCC 700824)</name>
    <name type="common">Campylobacter pylori J99</name>
    <dbReference type="NCBI Taxonomy" id="85963"/>
    <lineage>
        <taxon>Bacteria</taxon>
        <taxon>Pseudomonadati</taxon>
        <taxon>Campylobacterota</taxon>
        <taxon>Epsilonproteobacteria</taxon>
        <taxon>Campylobacterales</taxon>
        <taxon>Helicobacteraceae</taxon>
        <taxon>Helicobacter</taxon>
    </lineage>
</organism>